<gene>
    <name evidence="1" type="primary">GET1</name>
    <name type="ordered locus">KLLA0A04796g</name>
</gene>
<sequence length="213" mass="24286">MESWLLVILAFLVLERLWPLIDSLIQRFAQANSTKLKELMHQRQAILAEQKEISAQDQYVKWTKNNRTLEKINKQIEEEKKQLLSQVDRTKASLKKVKLVLITVPFTILKFYKGKMPIYDLPKGLFPNYLQGLFQHGWVYLALGPLNIKKVGDGTHVTVSLAIWLFALLKVVSTLGNIWESLTAPAIPAPTITTDPIDQTNESEKPPVDQPVD</sequence>
<reference key="1">
    <citation type="journal article" date="2004" name="Nature">
        <title>Genome evolution in yeasts.</title>
        <authorList>
            <person name="Dujon B."/>
            <person name="Sherman D."/>
            <person name="Fischer G."/>
            <person name="Durrens P."/>
            <person name="Casaregola S."/>
            <person name="Lafontaine I."/>
            <person name="de Montigny J."/>
            <person name="Marck C."/>
            <person name="Neuveglise C."/>
            <person name="Talla E."/>
            <person name="Goffard N."/>
            <person name="Frangeul L."/>
            <person name="Aigle M."/>
            <person name="Anthouard V."/>
            <person name="Babour A."/>
            <person name="Barbe V."/>
            <person name="Barnay S."/>
            <person name="Blanchin S."/>
            <person name="Beckerich J.-M."/>
            <person name="Beyne E."/>
            <person name="Bleykasten C."/>
            <person name="Boisrame A."/>
            <person name="Boyer J."/>
            <person name="Cattolico L."/>
            <person name="Confanioleri F."/>
            <person name="de Daruvar A."/>
            <person name="Despons L."/>
            <person name="Fabre E."/>
            <person name="Fairhead C."/>
            <person name="Ferry-Dumazet H."/>
            <person name="Groppi A."/>
            <person name="Hantraye F."/>
            <person name="Hennequin C."/>
            <person name="Jauniaux N."/>
            <person name="Joyet P."/>
            <person name="Kachouri R."/>
            <person name="Kerrest A."/>
            <person name="Koszul R."/>
            <person name="Lemaire M."/>
            <person name="Lesur I."/>
            <person name="Ma L."/>
            <person name="Muller H."/>
            <person name="Nicaud J.-M."/>
            <person name="Nikolski M."/>
            <person name="Oztas S."/>
            <person name="Ozier-Kalogeropoulos O."/>
            <person name="Pellenz S."/>
            <person name="Potier S."/>
            <person name="Richard G.-F."/>
            <person name="Straub M.-L."/>
            <person name="Suleau A."/>
            <person name="Swennen D."/>
            <person name="Tekaia F."/>
            <person name="Wesolowski-Louvel M."/>
            <person name="Westhof E."/>
            <person name="Wirth B."/>
            <person name="Zeniou-Meyer M."/>
            <person name="Zivanovic Y."/>
            <person name="Bolotin-Fukuhara M."/>
            <person name="Thierry A."/>
            <person name="Bouchier C."/>
            <person name="Caudron B."/>
            <person name="Scarpelli C."/>
            <person name="Gaillardin C."/>
            <person name="Weissenbach J."/>
            <person name="Wincker P."/>
            <person name="Souciet J.-L."/>
        </authorList>
    </citation>
    <scope>NUCLEOTIDE SEQUENCE [LARGE SCALE GENOMIC DNA]</scope>
    <source>
        <strain>ATCC 8585 / CBS 2359 / DSM 70799 / NBRC 1267 / NRRL Y-1140 / WM37</strain>
    </source>
</reference>
<organism>
    <name type="scientific">Kluyveromyces lactis (strain ATCC 8585 / CBS 2359 / DSM 70799 / NBRC 1267 / NRRL Y-1140 / WM37)</name>
    <name type="common">Yeast</name>
    <name type="synonym">Candida sphaerica</name>
    <dbReference type="NCBI Taxonomy" id="284590"/>
    <lineage>
        <taxon>Eukaryota</taxon>
        <taxon>Fungi</taxon>
        <taxon>Dikarya</taxon>
        <taxon>Ascomycota</taxon>
        <taxon>Saccharomycotina</taxon>
        <taxon>Saccharomycetes</taxon>
        <taxon>Saccharomycetales</taxon>
        <taxon>Saccharomycetaceae</taxon>
        <taxon>Kluyveromyces</taxon>
    </lineage>
</organism>
<name>GET1_KLULA</name>
<dbReference type="EMBL" id="CR382121">
    <property type="protein sequence ID" value="CAH02798.1"/>
    <property type="molecule type" value="Genomic_DNA"/>
</dbReference>
<dbReference type="RefSeq" id="XP_451210.1">
    <property type="nucleotide sequence ID" value="XM_451210.1"/>
</dbReference>
<dbReference type="SMR" id="Q6CXX9"/>
<dbReference type="FunCoup" id="Q6CXX9">
    <property type="interactions" value="47"/>
</dbReference>
<dbReference type="STRING" id="284590.Q6CXX9"/>
<dbReference type="PaxDb" id="284590-Q6CXX9"/>
<dbReference type="KEGG" id="kla:KLLA0_A04796g"/>
<dbReference type="eggNOG" id="KOG4253">
    <property type="taxonomic scope" value="Eukaryota"/>
</dbReference>
<dbReference type="HOGENOM" id="CLU_089418_2_1_1"/>
<dbReference type="InParanoid" id="Q6CXX9"/>
<dbReference type="OMA" id="AQDNYAR"/>
<dbReference type="Proteomes" id="UP000000598">
    <property type="component" value="Chromosome A"/>
</dbReference>
<dbReference type="GO" id="GO:0005789">
    <property type="term" value="C:endoplasmic reticulum membrane"/>
    <property type="evidence" value="ECO:0007669"/>
    <property type="project" value="UniProtKB-SubCell"/>
</dbReference>
<dbReference type="GO" id="GO:0043529">
    <property type="term" value="C:GET complex"/>
    <property type="evidence" value="ECO:0007669"/>
    <property type="project" value="UniProtKB-UniRule"/>
</dbReference>
<dbReference type="GO" id="GO:0000139">
    <property type="term" value="C:Golgi membrane"/>
    <property type="evidence" value="ECO:0007669"/>
    <property type="project" value="UniProtKB-SubCell"/>
</dbReference>
<dbReference type="GO" id="GO:0043495">
    <property type="term" value="F:protein-membrane adaptor activity"/>
    <property type="evidence" value="ECO:0007669"/>
    <property type="project" value="TreeGrafter"/>
</dbReference>
<dbReference type="GO" id="GO:0071816">
    <property type="term" value="P:tail-anchored membrane protein insertion into ER membrane"/>
    <property type="evidence" value="ECO:0007669"/>
    <property type="project" value="InterPro"/>
</dbReference>
<dbReference type="GO" id="GO:0016192">
    <property type="term" value="P:vesicle-mediated transport"/>
    <property type="evidence" value="ECO:0007669"/>
    <property type="project" value="UniProtKB-KW"/>
</dbReference>
<dbReference type="Gene3D" id="1.10.287.660">
    <property type="entry name" value="Helix hairpin bin"/>
    <property type="match status" value="1"/>
</dbReference>
<dbReference type="HAMAP" id="MF_03113">
    <property type="entry name" value="Get1"/>
    <property type="match status" value="1"/>
</dbReference>
<dbReference type="InterPro" id="IPR028945">
    <property type="entry name" value="Get1"/>
</dbReference>
<dbReference type="InterPro" id="IPR027538">
    <property type="entry name" value="Get1_fungi"/>
</dbReference>
<dbReference type="InterPro" id="IPR029012">
    <property type="entry name" value="Helix_hairpin_bin_sf"/>
</dbReference>
<dbReference type="PANTHER" id="PTHR42650:SF1">
    <property type="entry name" value="GUIDED ENTRY OF TAIL-ANCHORED PROTEINS FACTOR 1"/>
    <property type="match status" value="1"/>
</dbReference>
<dbReference type="PANTHER" id="PTHR42650">
    <property type="entry name" value="TAIL-ANCHORED PROTEIN INSERTION RECEPTOR WRB"/>
    <property type="match status" value="1"/>
</dbReference>
<dbReference type="Pfam" id="PF04420">
    <property type="entry name" value="CHD5"/>
    <property type="match status" value="1"/>
</dbReference>
<protein>
    <recommendedName>
        <fullName evidence="1">Golgi to ER traffic protein 1</fullName>
    </recommendedName>
    <alternativeName>
        <fullName evidence="1">Guided entry of tail-anchored proteins 1</fullName>
    </alternativeName>
</protein>
<evidence type="ECO:0000255" key="1">
    <source>
        <dbReference type="HAMAP-Rule" id="MF_03113"/>
    </source>
</evidence>
<evidence type="ECO:0000256" key="2">
    <source>
        <dbReference type="SAM" id="MobiDB-lite"/>
    </source>
</evidence>
<comment type="function">
    <text evidence="1">Required for the post-translational delivery of tail-anchored (TA) proteins to the endoplasmic reticulum. Together with GET2, acts as a membrane receptor for soluble GET3, which recognizes and selectively binds the transmembrane domain of TA proteins in the cytosol. The GET complex cooperates with the HDEL receptor ERD2 to mediate the ATP-dependent retrieval of resident ER proteins that contain a C-terminal H-D-E-L retention signal from the Golgi to the ER.</text>
</comment>
<comment type="subunit">
    <text evidence="1">Component of the Golgi to ER traffic (GET) complex, which is composed of GET1, GET2 and GET3. Within the complex, GET1 and GET2 form a heterotetramer which is stabilized by phosphatidylinositol binding and which binds to the GET3 homodimer.</text>
</comment>
<comment type="subcellular location">
    <subcellularLocation>
        <location evidence="1">Endoplasmic reticulum membrane</location>
        <topology evidence="1">Multi-pass membrane protein</topology>
    </subcellularLocation>
    <subcellularLocation>
        <location evidence="1">Golgi apparatus membrane</location>
        <topology evidence="1">Multi-pass membrane protein</topology>
    </subcellularLocation>
</comment>
<comment type="similarity">
    <text evidence="1">Belongs to the WRB/GET1 family.</text>
</comment>
<proteinExistence type="inferred from homology"/>
<accession>Q6CXX9</accession>
<keyword id="KW-0175">Coiled coil</keyword>
<keyword id="KW-0256">Endoplasmic reticulum</keyword>
<keyword id="KW-0931">ER-Golgi transport</keyword>
<keyword id="KW-0333">Golgi apparatus</keyword>
<keyword id="KW-0472">Membrane</keyword>
<keyword id="KW-1185">Reference proteome</keyword>
<keyword id="KW-0812">Transmembrane</keyword>
<keyword id="KW-1133">Transmembrane helix</keyword>
<keyword id="KW-0813">Transport</keyword>
<feature type="chain" id="PRO_0000388595" description="Golgi to ER traffic protein 1">
    <location>
        <begin position="1"/>
        <end position="213"/>
    </location>
</feature>
<feature type="topological domain" description="Lumenal" evidence="1">
    <location>
        <begin position="1"/>
        <end position="4"/>
    </location>
</feature>
<feature type="transmembrane region" description="Helical" evidence="1">
    <location>
        <begin position="5"/>
        <end position="25"/>
    </location>
</feature>
<feature type="topological domain" description="Cytoplasmic" evidence="1">
    <location>
        <begin position="26"/>
        <end position="98"/>
    </location>
</feature>
<feature type="transmembrane region" description="Helical" evidence="1">
    <location>
        <begin position="99"/>
        <end position="119"/>
    </location>
</feature>
<feature type="topological domain" description="Lumenal" evidence="1">
    <location>
        <begin position="120"/>
        <end position="158"/>
    </location>
</feature>
<feature type="transmembrane region" description="Helical" evidence="1">
    <location>
        <begin position="159"/>
        <end position="175"/>
    </location>
</feature>
<feature type="topological domain" description="Cytoplasmic" evidence="1">
    <location>
        <begin position="176"/>
        <end position="213"/>
    </location>
</feature>
<feature type="region of interest" description="Disordered" evidence="2">
    <location>
        <begin position="193"/>
        <end position="213"/>
    </location>
</feature>
<feature type="coiled-coil region" evidence="1">
    <location>
        <begin position="55"/>
        <end position="99"/>
    </location>
</feature>